<comment type="function">
    <text evidence="9">Effector that might be involved in host plant infection.</text>
</comment>
<comment type="subcellular location">
    <subcellularLocation>
        <location evidence="5">Secreted</location>
    </subcellularLocation>
    <subcellularLocation>
        <location evidence="5">Host cell membrane</location>
    </subcellularLocation>
</comment>
<comment type="induction">
    <text evidence="2 3 4">Expression is induced during host plant infection.</text>
</comment>
<comment type="domain">
    <text evidence="8">The RxLR-dEER motif acts to carry the protein into the host cell cytoplasm through binding to cell surface phosphatidylinositol-3-phosphate.</text>
</comment>
<comment type="similarity">
    <text evidence="7">Belongs to the RxLR effector family.</text>
</comment>
<gene>
    <name type="ORF">PITG_00582</name>
</gene>
<proteinExistence type="evidence at transcript level"/>
<sequence>MLPYKTLLLALGFFFTVQCHFFASASSFDIADNNQNGVRLLRSPEKTDEERGAVDALKSELSFMKLNWAARSKITPKEKLVAKQAKEMSNTKEKLSKIEAKLQAKAVKAEQKVKDQAIKAEQNLKAKNEKAAQQLKALQQNELEKLAKQAAKDDKMYNRWLMAEMTPDDVYKKFKFKELAKKGIYPTTSVNYKHYKNYRTIYYARYPKLLEKLDA</sequence>
<organism>
    <name type="scientific">Phytophthora infestans (strain T30-4)</name>
    <name type="common">Potato late blight agent</name>
    <dbReference type="NCBI Taxonomy" id="403677"/>
    <lineage>
        <taxon>Eukaryota</taxon>
        <taxon>Sar</taxon>
        <taxon>Stramenopiles</taxon>
        <taxon>Oomycota</taxon>
        <taxon>Peronosporales</taxon>
        <taxon>Peronosporaceae</taxon>
        <taxon>Phytophthora</taxon>
    </lineage>
</organism>
<evidence type="ECO:0000255" key="1"/>
<evidence type="ECO:0000269" key="2">
    <source>
    </source>
</evidence>
<evidence type="ECO:0000269" key="3">
    <source>
    </source>
</evidence>
<evidence type="ECO:0000269" key="4">
    <source>
    </source>
</evidence>
<evidence type="ECO:0000269" key="5">
    <source>
    </source>
</evidence>
<evidence type="ECO:0000303" key="6">
    <source>
    </source>
</evidence>
<evidence type="ECO:0000305" key="7"/>
<evidence type="ECO:0000305" key="8">
    <source>
    </source>
</evidence>
<evidence type="ECO:0000305" key="9">
    <source>
    </source>
</evidence>
<dbReference type="EMBL" id="DS028118">
    <property type="protein sequence ID" value="EEY57983.1"/>
    <property type="molecule type" value="Genomic_DNA"/>
</dbReference>
<dbReference type="RefSeq" id="XP_002909169.1">
    <property type="nucleotide sequence ID" value="XM_002909123.1"/>
</dbReference>
<dbReference type="SMR" id="D0MR64"/>
<dbReference type="STRING" id="403677.D0MR64"/>
<dbReference type="EnsemblProtists" id="PITG_00582T0">
    <property type="protein sequence ID" value="PITG_00582T0"/>
    <property type="gene ID" value="PITG_00582"/>
</dbReference>
<dbReference type="GeneID" id="9477704"/>
<dbReference type="KEGG" id="pif:PITG_00582"/>
<dbReference type="VEuPathDB" id="FungiDB:PITG_00582"/>
<dbReference type="eggNOG" id="ENOG502RGCD">
    <property type="taxonomic scope" value="Eukaryota"/>
</dbReference>
<dbReference type="HOGENOM" id="CLU_1211849_0_0_1"/>
<dbReference type="InParanoid" id="D0MR64"/>
<dbReference type="OMA" id="KMYNRWL"/>
<dbReference type="OrthoDB" id="122912at2759"/>
<dbReference type="Proteomes" id="UP000006643">
    <property type="component" value="Partially assembled WGS sequence"/>
</dbReference>
<dbReference type="GO" id="GO:0005576">
    <property type="term" value="C:extracellular region"/>
    <property type="evidence" value="ECO:0007669"/>
    <property type="project" value="UniProtKB-SubCell"/>
</dbReference>
<dbReference type="GO" id="GO:0020002">
    <property type="term" value="C:host cell plasma membrane"/>
    <property type="evidence" value="ECO:0007669"/>
    <property type="project" value="UniProtKB-SubCell"/>
</dbReference>
<dbReference type="GO" id="GO:0016020">
    <property type="term" value="C:membrane"/>
    <property type="evidence" value="ECO:0007669"/>
    <property type="project" value="UniProtKB-KW"/>
</dbReference>
<protein>
    <recommendedName>
        <fullName evidence="6">RxLR effector protein PITG_00582</fullName>
    </recommendedName>
</protein>
<accession>D0MR64</accession>
<name>RXLRD_PHYIT</name>
<feature type="signal peptide" evidence="1">
    <location>
        <begin position="1"/>
        <end position="19"/>
    </location>
</feature>
<feature type="chain" id="PRO_5003012393" description="RxLR effector protein PITG_00582">
    <location>
        <begin position="20"/>
        <end position="215"/>
    </location>
</feature>
<feature type="coiled-coil region" evidence="1">
    <location>
        <begin position="81"/>
        <end position="149"/>
    </location>
</feature>
<feature type="short sequence motif" description="RxLR-dEER" evidence="8">
    <location>
        <begin position="39"/>
        <end position="51"/>
    </location>
</feature>
<reference key="1">
    <citation type="journal article" date="2009" name="Nature">
        <title>Genome sequence and analysis of the Irish potato famine pathogen Phytophthora infestans.</title>
        <authorList>
            <consortium name="The Broad Institute Genome Sequencing Platform"/>
            <person name="Haas B.J."/>
            <person name="Kamoun S."/>
            <person name="Zody M.C."/>
            <person name="Jiang R.H."/>
            <person name="Handsaker R.E."/>
            <person name="Cano L.M."/>
            <person name="Grabherr M."/>
            <person name="Kodira C.D."/>
            <person name="Raffaele S."/>
            <person name="Torto-Alalibo T."/>
            <person name="Bozkurt T.O."/>
            <person name="Ah-Fong A.M."/>
            <person name="Alvarado L."/>
            <person name="Anderson V.L."/>
            <person name="Armstrong M.R."/>
            <person name="Avrova A."/>
            <person name="Baxter L."/>
            <person name="Beynon J."/>
            <person name="Boevink P.C."/>
            <person name="Bollmann S.R."/>
            <person name="Bos J.I."/>
            <person name="Bulone V."/>
            <person name="Cai G."/>
            <person name="Cakir C."/>
            <person name="Carrington J.C."/>
            <person name="Chawner M."/>
            <person name="Conti L."/>
            <person name="Costanzo S."/>
            <person name="Ewan R."/>
            <person name="Fahlgren N."/>
            <person name="Fischbach M.A."/>
            <person name="Fugelstad J."/>
            <person name="Gilroy E.M."/>
            <person name="Gnerre S."/>
            <person name="Green P.J."/>
            <person name="Grenville-Briggs L.J."/>
            <person name="Griffith J."/>
            <person name="Grunwald N.J."/>
            <person name="Horn K."/>
            <person name="Horner N.R."/>
            <person name="Hu C.H."/>
            <person name="Huitema E."/>
            <person name="Jeong D.H."/>
            <person name="Jones A.M."/>
            <person name="Jones J.D."/>
            <person name="Jones R.W."/>
            <person name="Karlsson E.K."/>
            <person name="Kunjeti S.G."/>
            <person name="Lamour K."/>
            <person name="Liu Z."/>
            <person name="Ma L."/>
            <person name="Maclean D."/>
            <person name="Chibucos M.C."/>
            <person name="McDonald H."/>
            <person name="McWalters J."/>
            <person name="Meijer H.J."/>
            <person name="Morgan W."/>
            <person name="Morris P.F."/>
            <person name="Munro C.A."/>
            <person name="O'Neill K."/>
            <person name="Ospina-Giraldo M."/>
            <person name="Pinzon A."/>
            <person name="Pritchard L."/>
            <person name="Ramsahoye B."/>
            <person name="Ren Q."/>
            <person name="Restrepo S."/>
            <person name="Roy S."/>
            <person name="Sadanandom A."/>
            <person name="Savidor A."/>
            <person name="Schornack S."/>
            <person name="Schwartz D.C."/>
            <person name="Schumann U.D."/>
            <person name="Schwessinger B."/>
            <person name="Seyer L."/>
            <person name="Sharpe T."/>
            <person name="Silvar C."/>
            <person name="Song J."/>
            <person name="Studholme D.J."/>
            <person name="Sykes S."/>
            <person name="Thines M."/>
            <person name="van de Vondervoort P.J."/>
            <person name="Phuntumart V."/>
            <person name="Wawra S."/>
            <person name="Weide R."/>
            <person name="Win J."/>
            <person name="Young C."/>
            <person name="Zhou S."/>
            <person name="Fry W."/>
            <person name="Meyers B.C."/>
            <person name="van West P."/>
            <person name="Ristaino J."/>
            <person name="Govers F."/>
            <person name="Birch P.R."/>
            <person name="Whisson S.C."/>
            <person name="Judelson H.S."/>
            <person name="Nusbaum C."/>
        </authorList>
    </citation>
    <scope>NUCLEOTIDE SEQUENCE [LARGE SCALE GENOMIC DNA]</scope>
    <scope>INDUCTION</scope>
    <source>
        <strain>T30-4</strain>
    </source>
</reference>
<reference key="2">
    <citation type="journal article" date="2017" name="BMC Genomics">
        <title>RNA-seq of life stages of the oomycete Phytophthora infestans reveals dynamic changes in metabolic, signal transduction, and pathogenesis genes and a major role for calcium signaling in development.</title>
        <authorList>
            <person name="Ah-Fong A.M."/>
            <person name="Kim K.S."/>
            <person name="Judelson H.S."/>
        </authorList>
    </citation>
    <scope>INDUCTION</scope>
</reference>
<reference key="3">
    <citation type="journal article" date="2017" name="Front. Plant Sci.">
        <title>Conserved RXLR effector genes of Phytophthora infestans expressed at the early stage of potato infection are suppressive to host defense.</title>
        <authorList>
            <person name="Yin J."/>
            <person name="Gu B."/>
            <person name="Huang G."/>
            <person name="Tian Y."/>
            <person name="Quan J."/>
            <person name="Lindqvist-Kreuze H."/>
            <person name="Shan W."/>
        </authorList>
    </citation>
    <scope>INDUCTION</scope>
    <scope>DOMAIN</scope>
</reference>
<reference key="4">
    <citation type="journal article" date="2019" name="J. Exp. Bot.">
        <title>Phytophthora infestans RXLR effectors act in concert at diverse subcellular locations to enhance host colonization.</title>
        <authorList>
            <person name="Wang S."/>
            <person name="McLellan H."/>
            <person name="Bukharova T."/>
            <person name="He Q."/>
            <person name="Murphy F."/>
            <person name="Shi J."/>
            <person name="Sun S."/>
            <person name="van Weymers P."/>
            <person name="Ren Y."/>
            <person name="Thilliez G."/>
            <person name="Wang H."/>
            <person name="Chen X."/>
            <person name="Engelhardt S."/>
            <person name="Vleeshouwers V."/>
            <person name="Gilroy E.M."/>
            <person name="Whisson S.C."/>
            <person name="Hein I."/>
            <person name="Wang X."/>
            <person name="Tian Z."/>
            <person name="Birch P.R.J."/>
            <person name="Boevink P.C."/>
        </authorList>
    </citation>
    <scope>SUBCELLULAR LOCATION</scope>
</reference>
<keyword id="KW-0175">Coiled coil</keyword>
<keyword id="KW-1032">Host cell membrane</keyword>
<keyword id="KW-1043">Host membrane</keyword>
<keyword id="KW-0472">Membrane</keyword>
<keyword id="KW-1185">Reference proteome</keyword>
<keyword id="KW-0964">Secreted</keyword>
<keyword id="KW-0732">Signal</keyword>
<keyword id="KW-0843">Virulence</keyword>